<dbReference type="EMBL" id="AB029488">
    <property type="protein sequence ID" value="BAA89482.1"/>
    <property type="molecule type" value="mRNA"/>
</dbReference>
<dbReference type="EMBL" id="AC129929">
    <property type="status" value="NOT_ANNOTATED_CDS"/>
    <property type="molecule type" value="Genomic_DNA"/>
</dbReference>
<dbReference type="CCDS" id="CCDS86168.1"/>
<dbReference type="RefSeq" id="NP_001136418.1">
    <property type="nucleotide sequence ID" value="NM_001142946.2"/>
</dbReference>
<dbReference type="RefSeq" id="NP_001316887.1">
    <property type="nucleotide sequence ID" value="NM_001329958.2"/>
</dbReference>
<dbReference type="BioGRID" id="118890">
    <property type="interactions" value="1"/>
</dbReference>
<dbReference type="STRING" id="9606.ENSP00000406541"/>
<dbReference type="BioMuta" id="C11orf21"/>
<dbReference type="PaxDb" id="9606-ENSP00000406541"/>
<dbReference type="Antibodypedia" id="51578">
    <property type="antibodies" value="39 antibodies from 8 providers"/>
</dbReference>
<dbReference type="DNASU" id="29125"/>
<dbReference type="Ensembl" id="ENST00000381153.8">
    <property type="protein sequence ID" value="ENSP00000370545.4"/>
    <property type="gene ID" value="ENSG00000110665.12"/>
</dbReference>
<dbReference type="GeneID" id="29125"/>
<dbReference type="KEGG" id="hsa:29125"/>
<dbReference type="MANE-Select" id="ENST00000381153.8">
    <property type="protein sequence ID" value="ENSP00000370545.4"/>
    <property type="RefSeq nucleotide sequence ID" value="NM_001329958.2"/>
    <property type="RefSeq protein sequence ID" value="NP_001316887.1"/>
</dbReference>
<dbReference type="UCSC" id="uc001lvv.3">
    <property type="organism name" value="human"/>
</dbReference>
<dbReference type="AGR" id="HGNC:13231"/>
<dbReference type="CTD" id="29125"/>
<dbReference type="DisGeNET" id="29125"/>
<dbReference type="GeneCards" id="C11orf21"/>
<dbReference type="HGNC" id="HGNC:13231">
    <property type="gene designation" value="C11orf21"/>
</dbReference>
<dbReference type="HPA" id="ENSG00000110665">
    <property type="expression patterns" value="Group enriched (bone marrow, heart muscle, lymphoid tissue)"/>
</dbReference>
<dbReference type="MIM" id="611033">
    <property type="type" value="gene"/>
</dbReference>
<dbReference type="neXtProt" id="NX_Q9P2W6"/>
<dbReference type="OpenTargets" id="ENSG00000110665"/>
<dbReference type="PharmGKB" id="PA25486"/>
<dbReference type="VEuPathDB" id="HostDB:ENSG00000110665"/>
<dbReference type="eggNOG" id="ENOG502TERA">
    <property type="taxonomic scope" value="Eukaryota"/>
</dbReference>
<dbReference type="GeneTree" id="ENSGT00390000000843"/>
<dbReference type="InParanoid" id="Q9P2W6"/>
<dbReference type="OMA" id="RAGCGMQ"/>
<dbReference type="OrthoDB" id="9520856at2759"/>
<dbReference type="PAN-GO" id="Q9P2W6">
    <property type="GO annotations" value="0 GO annotations based on evolutionary models"/>
</dbReference>
<dbReference type="PathwayCommons" id="Q9P2W6"/>
<dbReference type="SignaLink" id="Q9P2W6"/>
<dbReference type="BioGRID-ORCS" id="29125">
    <property type="hits" value="11 hits in 1095 CRISPR screens"/>
</dbReference>
<dbReference type="GenomeRNAi" id="29125"/>
<dbReference type="Pharos" id="Q9P2W6">
    <property type="development level" value="Tdark"/>
</dbReference>
<dbReference type="PRO" id="PR:Q9P2W6"/>
<dbReference type="Proteomes" id="UP000005640">
    <property type="component" value="Chromosome 11"/>
</dbReference>
<dbReference type="RNAct" id="Q9P2W6">
    <property type="molecule type" value="protein"/>
</dbReference>
<dbReference type="Bgee" id="ENSG00000110665">
    <property type="expression patterns" value="Expressed in granulocyte and 115 other cell types or tissues"/>
</dbReference>
<dbReference type="ExpressionAtlas" id="Q9P2W6">
    <property type="expression patterns" value="baseline and differential"/>
</dbReference>
<dbReference type="GO" id="GO:0005737">
    <property type="term" value="C:cytoplasm"/>
    <property type="evidence" value="ECO:0007669"/>
    <property type="project" value="UniProtKB-SubCell"/>
</dbReference>
<dbReference type="InterPro" id="IPR027894">
    <property type="entry name" value="DUF4620"/>
</dbReference>
<dbReference type="Pfam" id="PF15399">
    <property type="entry name" value="DUF4620"/>
    <property type="match status" value="1"/>
</dbReference>
<name>CK021_HUMAN</name>
<keyword id="KW-0963">Cytoplasm</keyword>
<keyword id="KW-1185">Reference proteome</keyword>
<accession>Q9P2W6</accession>
<reference key="1">
    <citation type="journal article" date="2000" name="Gene">
        <title>C11orf21, a novel gene within the Beckwith-Wiedemann syndrome region in human chromosome 11p15.5.</title>
        <authorList>
            <person name="Zhu X."/>
            <person name="Higashimoto K."/>
            <person name="Soejima H."/>
            <person name="Yatsuki H."/>
            <person name="Sugihara H."/>
            <person name="Mukai T."/>
            <person name="Joh K."/>
        </authorList>
    </citation>
    <scope>NUCLEOTIDE SEQUENCE [MRNA]</scope>
</reference>
<reference key="2">
    <citation type="journal article" date="2006" name="Nature">
        <title>Human chromosome 11 DNA sequence and analysis including novel gene identification.</title>
        <authorList>
            <person name="Taylor T.D."/>
            <person name="Noguchi H."/>
            <person name="Totoki Y."/>
            <person name="Toyoda A."/>
            <person name="Kuroki Y."/>
            <person name="Dewar K."/>
            <person name="Lloyd C."/>
            <person name="Itoh T."/>
            <person name="Takeda T."/>
            <person name="Kim D.-W."/>
            <person name="She X."/>
            <person name="Barlow K.F."/>
            <person name="Bloom T."/>
            <person name="Bruford E."/>
            <person name="Chang J.L."/>
            <person name="Cuomo C.A."/>
            <person name="Eichler E."/>
            <person name="FitzGerald M.G."/>
            <person name="Jaffe D.B."/>
            <person name="LaButti K."/>
            <person name="Nicol R."/>
            <person name="Park H.-S."/>
            <person name="Seaman C."/>
            <person name="Sougnez C."/>
            <person name="Yang X."/>
            <person name="Zimmer A.R."/>
            <person name="Zody M.C."/>
            <person name="Birren B.W."/>
            <person name="Nusbaum C."/>
            <person name="Fujiyama A."/>
            <person name="Hattori M."/>
            <person name="Rogers J."/>
            <person name="Lander E.S."/>
            <person name="Sakaki Y."/>
        </authorList>
    </citation>
    <scope>NUCLEOTIDE SEQUENCE [LARGE SCALE GENOMIC DNA]</scope>
</reference>
<evidence type="ECO:0000256" key="1">
    <source>
        <dbReference type="SAM" id="MobiDB-lite"/>
    </source>
</evidence>
<feature type="chain" id="PRO_0000089834" description="Uncharacterized protein C11orf21">
    <location>
        <begin position="1"/>
        <end position="132"/>
    </location>
</feature>
<feature type="region of interest" description="Disordered" evidence="1">
    <location>
        <begin position="17"/>
        <end position="75"/>
    </location>
</feature>
<feature type="compositionally biased region" description="Low complexity" evidence="1">
    <location>
        <begin position="51"/>
        <end position="65"/>
    </location>
</feature>
<proteinExistence type="evidence at transcript level"/>
<sequence>MGRTWCGMWRRRRPGRRSAVPRWPHLSSQSGVEPPDRWTGTPGWPSRDQEAPGSMMPPAAAQPSAHGALVPPATAHEPVDHPALHWLACCCCLSLPGQLPLAIRLGWDLDLEAGPSSGKLCPRARRWQPLPS</sequence>
<gene>
    <name type="primary">C11orf21</name>
</gene>
<organism>
    <name type="scientific">Homo sapiens</name>
    <name type="common">Human</name>
    <dbReference type="NCBI Taxonomy" id="9606"/>
    <lineage>
        <taxon>Eukaryota</taxon>
        <taxon>Metazoa</taxon>
        <taxon>Chordata</taxon>
        <taxon>Craniata</taxon>
        <taxon>Vertebrata</taxon>
        <taxon>Euteleostomi</taxon>
        <taxon>Mammalia</taxon>
        <taxon>Eutheria</taxon>
        <taxon>Euarchontoglires</taxon>
        <taxon>Primates</taxon>
        <taxon>Haplorrhini</taxon>
        <taxon>Catarrhini</taxon>
        <taxon>Hominidae</taxon>
        <taxon>Homo</taxon>
    </lineage>
</organism>
<protein>
    <recommendedName>
        <fullName>Uncharacterized protein C11orf21</fullName>
    </recommendedName>
</protein>
<comment type="subcellular location">
    <subcellularLocation>
        <location>Cytoplasm</location>
    </subcellularLocation>
</comment>
<comment type="tissue specificity">
    <text>Expressed exclusively in heart.</text>
</comment>